<gene>
    <name evidence="1" type="primary">hisZ</name>
    <name type="ordered locus">Pcryo_0644</name>
</gene>
<feature type="chain" id="PRO_0000242852" description="ATP phosphoribosyltransferase regulatory subunit">
    <location>
        <begin position="1"/>
        <end position="387"/>
    </location>
</feature>
<evidence type="ECO:0000255" key="1">
    <source>
        <dbReference type="HAMAP-Rule" id="MF_00125"/>
    </source>
</evidence>
<reference key="1">
    <citation type="submission" date="2006-03" db="EMBL/GenBank/DDBJ databases">
        <title>Complete sequence of chromosome of Psychrobacter cryohalolentis K5.</title>
        <authorList>
            <consortium name="US DOE Joint Genome Institute"/>
            <person name="Copeland A."/>
            <person name="Lucas S."/>
            <person name="Lapidus A."/>
            <person name="Barry K."/>
            <person name="Detter J.C."/>
            <person name="Glavina T."/>
            <person name="Hammon N."/>
            <person name="Israni S."/>
            <person name="Dalin E."/>
            <person name="Tice H."/>
            <person name="Pitluck S."/>
            <person name="Brettin T."/>
            <person name="Bruce D."/>
            <person name="Han C."/>
            <person name="Tapia R."/>
            <person name="Sims D.R."/>
            <person name="Gilna P."/>
            <person name="Schmutz J."/>
            <person name="Larimer F."/>
            <person name="Land M."/>
            <person name="Hauser L."/>
            <person name="Kyrpides N."/>
            <person name="Kim E."/>
            <person name="Richardson P."/>
        </authorList>
    </citation>
    <scope>NUCLEOTIDE SEQUENCE [LARGE SCALE GENOMIC DNA]</scope>
    <source>
        <strain>ATCC BAA-1226 / DSM 17306 / VKM B-2378 / K5</strain>
    </source>
</reference>
<keyword id="KW-0028">Amino-acid biosynthesis</keyword>
<keyword id="KW-0963">Cytoplasm</keyword>
<keyword id="KW-0368">Histidine biosynthesis</keyword>
<accession>Q1QD26</accession>
<sequence>MLPDGVVDVLFEDAHKQEVLRHQLIQQLISHGYQLVNPPMIEFTESLLSGASEDLKRQTFKIIDQLTGRLMGIRADITPQILRIDAHHGGDGIARYCYAGDVIHTLPSGLFGSRTPLQLGAEIFGCEYIAADIELIDVLFSMLNSLEMSAALHVDLGHVAIFKRLAELAVLSESDTEQLMQLYANKNLPELKQVCQALPLGSDFYTLARFGHDIANLLGRLSENAQQDAQIVTAIDELQRLKAHLQVQWQCAVSIDVTELSGYHYHTGIVFNGYINSETQPLVRGGRFDGMKSNQLATNQPRQATGFSMDVSRLLAHTQLDAPVIVLVDYDAFKDLGSEQLQLLLQQVASLRQQGYRVTMPLTAKDIPVGMTHRLSLVDNQWQLHAV</sequence>
<protein>
    <recommendedName>
        <fullName evidence="1">ATP phosphoribosyltransferase regulatory subunit</fullName>
    </recommendedName>
</protein>
<dbReference type="EMBL" id="CP000323">
    <property type="protein sequence ID" value="ABE74427.1"/>
    <property type="molecule type" value="Genomic_DNA"/>
</dbReference>
<dbReference type="SMR" id="Q1QD26"/>
<dbReference type="STRING" id="335284.Pcryo_0644"/>
<dbReference type="KEGG" id="pcr:Pcryo_0644"/>
<dbReference type="eggNOG" id="COG3705">
    <property type="taxonomic scope" value="Bacteria"/>
</dbReference>
<dbReference type="HOGENOM" id="CLU_025113_0_1_6"/>
<dbReference type="UniPathway" id="UPA00031">
    <property type="reaction ID" value="UER00006"/>
</dbReference>
<dbReference type="Proteomes" id="UP000002425">
    <property type="component" value="Chromosome"/>
</dbReference>
<dbReference type="GO" id="GO:0005737">
    <property type="term" value="C:cytoplasm"/>
    <property type="evidence" value="ECO:0007669"/>
    <property type="project" value="UniProtKB-SubCell"/>
</dbReference>
<dbReference type="GO" id="GO:0004821">
    <property type="term" value="F:histidine-tRNA ligase activity"/>
    <property type="evidence" value="ECO:0007669"/>
    <property type="project" value="TreeGrafter"/>
</dbReference>
<dbReference type="GO" id="GO:0006427">
    <property type="term" value="P:histidyl-tRNA aminoacylation"/>
    <property type="evidence" value="ECO:0007669"/>
    <property type="project" value="TreeGrafter"/>
</dbReference>
<dbReference type="GO" id="GO:0000105">
    <property type="term" value="P:L-histidine biosynthetic process"/>
    <property type="evidence" value="ECO:0007669"/>
    <property type="project" value="UniProtKB-UniRule"/>
</dbReference>
<dbReference type="Gene3D" id="3.30.930.10">
    <property type="entry name" value="Bira Bifunctional Protein, Domain 2"/>
    <property type="match status" value="1"/>
</dbReference>
<dbReference type="HAMAP" id="MF_00125">
    <property type="entry name" value="HisZ"/>
    <property type="match status" value="1"/>
</dbReference>
<dbReference type="InterPro" id="IPR045864">
    <property type="entry name" value="aa-tRNA-synth_II/BPL/LPL"/>
</dbReference>
<dbReference type="InterPro" id="IPR041715">
    <property type="entry name" value="HisRS-like_core"/>
</dbReference>
<dbReference type="InterPro" id="IPR004516">
    <property type="entry name" value="HisRS/HisZ"/>
</dbReference>
<dbReference type="InterPro" id="IPR004517">
    <property type="entry name" value="HisZ"/>
</dbReference>
<dbReference type="NCBIfam" id="NF009086">
    <property type="entry name" value="PRK12421.1"/>
    <property type="match status" value="1"/>
</dbReference>
<dbReference type="PANTHER" id="PTHR43707:SF1">
    <property type="entry name" value="HISTIDINE--TRNA LIGASE, MITOCHONDRIAL-RELATED"/>
    <property type="match status" value="1"/>
</dbReference>
<dbReference type="PANTHER" id="PTHR43707">
    <property type="entry name" value="HISTIDYL-TRNA SYNTHETASE"/>
    <property type="match status" value="1"/>
</dbReference>
<dbReference type="Pfam" id="PF13393">
    <property type="entry name" value="tRNA-synt_His"/>
    <property type="match status" value="1"/>
</dbReference>
<dbReference type="PIRSF" id="PIRSF001549">
    <property type="entry name" value="His-tRNA_synth"/>
    <property type="match status" value="1"/>
</dbReference>
<dbReference type="SUPFAM" id="SSF55681">
    <property type="entry name" value="Class II aaRS and biotin synthetases"/>
    <property type="match status" value="1"/>
</dbReference>
<name>HISZ_PSYCK</name>
<comment type="function">
    <text evidence="1">Required for the first step of histidine biosynthesis. May allow the feedback regulation of ATP phosphoribosyltransferase activity by histidine.</text>
</comment>
<comment type="pathway">
    <text evidence="1">Amino-acid biosynthesis; L-histidine biosynthesis; L-histidine from 5-phospho-alpha-D-ribose 1-diphosphate: step 1/9.</text>
</comment>
<comment type="subunit">
    <text evidence="1">Heteromultimer composed of HisG and HisZ subunits.</text>
</comment>
<comment type="subcellular location">
    <subcellularLocation>
        <location evidence="1">Cytoplasm</location>
    </subcellularLocation>
</comment>
<comment type="miscellaneous">
    <text>This function is generally fulfilled by the C-terminal part of HisG, which is missing in some bacteria such as this one.</text>
</comment>
<comment type="similarity">
    <text evidence="1">Belongs to the class-II aminoacyl-tRNA synthetase family. HisZ subfamily.</text>
</comment>
<organism>
    <name type="scientific">Psychrobacter cryohalolentis (strain ATCC BAA-1226 / DSM 17306 / VKM B-2378 / K5)</name>
    <dbReference type="NCBI Taxonomy" id="335284"/>
    <lineage>
        <taxon>Bacteria</taxon>
        <taxon>Pseudomonadati</taxon>
        <taxon>Pseudomonadota</taxon>
        <taxon>Gammaproteobacteria</taxon>
        <taxon>Moraxellales</taxon>
        <taxon>Moraxellaceae</taxon>
        <taxon>Psychrobacter</taxon>
    </lineage>
</organism>
<proteinExistence type="inferred from homology"/>